<accession>O74198</accession>
<accession>A0A1D8PJE1</accession>
<accession>Q5AJG1</accession>
<reference key="1">
    <citation type="journal article" date="1998" name="Antimicrob. Agents Chemother.">
        <title>Sequencing, disruption, and characterization of the Candida albicans sterol methyltransferase (ERG6) gene: drug susceptibility studies in erg6 mutants.</title>
        <authorList>
            <person name="Jensen-Pergakes K.L."/>
            <person name="Kennedy M.A."/>
            <person name="Lees N.D."/>
            <person name="Barbuch R."/>
            <person name="Koegel C."/>
            <person name="Bard M."/>
        </authorList>
    </citation>
    <scope>NUCLEOTIDE SEQUENCE [GENOMIC DNA]</scope>
    <scope>FUNCTION</scope>
    <scope>DISRUPTION PHENOTYPE</scope>
</reference>
<reference key="2">
    <citation type="journal article" date="2004" name="Proc. Natl. Acad. Sci. U.S.A.">
        <title>The diploid genome sequence of Candida albicans.</title>
        <authorList>
            <person name="Jones T."/>
            <person name="Federspiel N.A."/>
            <person name="Chibana H."/>
            <person name="Dungan J."/>
            <person name="Kalman S."/>
            <person name="Magee B.B."/>
            <person name="Newport G."/>
            <person name="Thorstenson Y.R."/>
            <person name="Agabian N."/>
            <person name="Magee P.T."/>
            <person name="Davis R.W."/>
            <person name="Scherer S."/>
        </authorList>
    </citation>
    <scope>NUCLEOTIDE SEQUENCE [LARGE SCALE GENOMIC DNA]</scope>
    <source>
        <strain>SC5314 / ATCC MYA-2876</strain>
    </source>
</reference>
<reference key="3">
    <citation type="journal article" date="2007" name="Genome Biol.">
        <title>Assembly of the Candida albicans genome into sixteen supercontigs aligned on the eight chromosomes.</title>
        <authorList>
            <person name="van het Hoog M."/>
            <person name="Rast T.J."/>
            <person name="Martchenko M."/>
            <person name="Grindle S."/>
            <person name="Dignard D."/>
            <person name="Hogues H."/>
            <person name="Cuomo C."/>
            <person name="Berriman M."/>
            <person name="Scherer S."/>
            <person name="Magee B.B."/>
            <person name="Whiteway M."/>
            <person name="Chibana H."/>
            <person name="Nantel A."/>
            <person name="Magee P.T."/>
        </authorList>
    </citation>
    <scope>GENOME REANNOTATION</scope>
    <source>
        <strain>SC5314 / ATCC MYA-2876</strain>
    </source>
</reference>
<reference key="4">
    <citation type="journal article" date="2013" name="Genome Biol.">
        <title>Assembly of a phased diploid Candida albicans genome facilitates allele-specific measurements and provides a simple model for repeat and indel structure.</title>
        <authorList>
            <person name="Muzzey D."/>
            <person name="Schwartz K."/>
            <person name="Weissman J.S."/>
            <person name="Sherlock G."/>
        </authorList>
    </citation>
    <scope>NUCLEOTIDE SEQUENCE [LARGE SCALE GENOMIC DNA]</scope>
    <scope>GENOME REANNOTATION</scope>
    <source>
        <strain>SC5314 / ATCC MYA-2876</strain>
    </source>
</reference>
<reference key="5">
    <citation type="journal article" date="2002" name="EMBO J.">
        <title>Calcineurin is essential for survival during membrane stress in Candida albicans.</title>
        <authorList>
            <person name="Cruz M.C."/>
            <person name="Goldstein A.L."/>
            <person name="Blankenship J.R."/>
            <person name="Del Poeta M."/>
            <person name="Davis D."/>
            <person name="Cardenas M.E."/>
            <person name="Perfect J.R."/>
            <person name="McCusker J.H."/>
            <person name="Heitman J."/>
        </authorList>
    </citation>
    <scope>DISRUPTION PHENOTYPE</scope>
</reference>
<reference key="6">
    <citation type="journal article" date="2005" name="J. Antimicrob. Chemother.">
        <title>Exposure of Candida albicans to antifungal agents affects expression of SAP2 and SAP9 secreted proteinase genes.</title>
        <authorList>
            <person name="Copping V.M.S."/>
            <person name="Barelle C.J."/>
            <person name="Hube B."/>
            <person name="Gow N.A.R."/>
            <person name="Brown A.J.P."/>
            <person name="Odds F.C."/>
        </authorList>
    </citation>
    <scope>INDUCTION</scope>
</reference>
<reference key="7">
    <citation type="journal article" date="2011" name="Arch. Biochem. Biophys.">
        <title>Purification, characterization and inhibition of sterol C24-methyltransferase from Candida albicans.</title>
        <authorList>
            <person name="Ganapathy K."/>
            <person name="Kanagasabai R."/>
            <person name="Nguyen T.T."/>
            <person name="Nes W.D."/>
        </authorList>
    </citation>
    <scope>FUNCTION</scope>
    <scope>CATALYTIC ACTIVITY</scope>
    <scope>BIOPHYSICOCHEMICAL PROPERTIES</scope>
    <scope>ACTIVITY REGULATION</scope>
    <scope>PATHWAY</scope>
</reference>
<reference key="8">
    <citation type="journal article" date="2011" name="J. Biol. Chem.">
        <title>Cap2-HAP complex is a critical transcriptional regulator that has dual but contrasting roles in regulation of iron homeostasis in Candida albicans.</title>
        <authorList>
            <person name="Singh R.P."/>
            <person name="Prasad H.K."/>
            <person name="Sinha I."/>
            <person name="Agarwal N."/>
            <person name="Natarajan K."/>
        </authorList>
    </citation>
    <scope>INDUCTION</scope>
</reference>
<reference key="9">
    <citation type="journal article" date="2012" name="Cell">
        <title>A recently evolved transcriptional network controls biofilm development in Candida albicans.</title>
        <authorList>
            <person name="Nobile C.J."/>
            <person name="Fox E.P."/>
            <person name="Nett J.E."/>
            <person name="Sorrells T.R."/>
            <person name="Mitrovich Q.M."/>
            <person name="Hernday A.D."/>
            <person name="Tuch B.B."/>
            <person name="Andes D.R."/>
            <person name="Johnson A.D."/>
        </authorList>
    </citation>
    <scope>INDUCTION</scope>
</reference>
<reference key="10">
    <citation type="journal article" date="2012" name="Fungal Genet. Biol.">
        <title>Quantitative proteomics and metabolomics approaches to demonstrate N-acetyl-D-glucosamine inducible amino acid deprivation response as morphological switch in Candida albicans.</title>
        <authorList>
            <person name="Kamthan M."/>
            <person name="Mukhopadhyay G."/>
            <person name="Chakraborty N."/>
            <person name="Chakraborty S."/>
            <person name="Datta A."/>
        </authorList>
    </citation>
    <scope>INDUCTION</scope>
</reference>
<feature type="chain" id="PRO_0000124789" description="Sterol 24-C-methyltransferase">
    <location>
        <begin position="1"/>
        <end position="376"/>
    </location>
</feature>
<feature type="sequence conflict" description="In Ref. 1; AAC26626." ref="1">
    <original>V</original>
    <variation>I</variation>
    <location>
        <position position="222"/>
    </location>
</feature>
<proteinExistence type="evidence at protein level"/>
<evidence type="ECO:0000269" key="1">
    <source>
    </source>
</evidence>
<evidence type="ECO:0000269" key="2">
    <source>
    </source>
</evidence>
<evidence type="ECO:0000269" key="3">
    <source>
    </source>
</evidence>
<evidence type="ECO:0000269" key="4">
    <source>
    </source>
</evidence>
<evidence type="ECO:0000269" key="5">
    <source>
    </source>
</evidence>
<evidence type="ECO:0000269" key="6">
    <source>
    </source>
</evidence>
<evidence type="ECO:0000269" key="7">
    <source>
    </source>
</evidence>
<evidence type="ECO:0000303" key="8">
    <source>
    </source>
</evidence>
<evidence type="ECO:0000305" key="9"/>
<gene>
    <name evidence="8" type="primary">ERG6</name>
    <name type="ordered locus">CAALFM_C302150CA</name>
    <name type="ORF">CaO19.1631</name>
    <name type="ORF">CaO19.9199</name>
</gene>
<keyword id="KW-0444">Lipid biosynthesis</keyword>
<keyword id="KW-0443">Lipid metabolism</keyword>
<keyword id="KW-0489">Methyltransferase</keyword>
<keyword id="KW-1185">Reference proteome</keyword>
<keyword id="KW-0949">S-adenosyl-L-methionine</keyword>
<keyword id="KW-0752">Steroid biosynthesis</keyword>
<keyword id="KW-0753">Steroid metabolism</keyword>
<keyword id="KW-0756">Sterol biosynthesis</keyword>
<keyword id="KW-1207">Sterol metabolism</keyword>
<keyword id="KW-0808">Transferase</keyword>
<comment type="function">
    <text evidence="3 7 9">Sterol 24-C-methyltransferase; part of the third module of ergosterol biosynthesis pathway that includes the late steps of the pathway (PubMed:20946868, PubMed:9593144). ERG6 catalyzes the methyl transfer from S-adenosyl-methionine to the C-24 of zymosterol to form fecosterol (PubMed:20946868, PubMed:9593144). The third module or late pathway involves the ergosterol synthesis itself through consecutive reactions that mainly occur in the endoplasmic reticulum (ER) membrane. Firstly, the squalene synthase ERG9 catalyzes the condensation of 2 farnesyl pyrophosphate moieties to form squalene, which is the precursor of all steroids. Squalene synthase is crucial for balancing the incorporation of farnesyl diphosphate (FPP) into sterol and nonsterol isoprene synthesis. Secondly, the squalene epoxidase ERG1 catalyzes the stereospecific oxidation of squalene to (S)-2,3-epoxysqualene, which is considered to be a rate-limiting enzyme in steroid biosynthesis. Then, the lanosterol synthase ERG7 catalyzes the cyclization of (S)-2,3 oxidosqualene to lanosterol, a reaction that forms the sterol core. In the next steps, lanosterol is transformed to zymosterol through a complex process involving various demethylation, reduction and desaturation reactions. The lanosterol 14-alpha-demethylase ERG11 (also known as CYP51) catalyzes C14-demethylation of lanosterol to produce 4,4'-dimethyl cholesta-8,14,24-triene-3-beta-ol, which is critical for ergosterol biosynthesis. The C-14 reductase ERG24 reduces the C14=C15 double bond of 4,4-dimethyl-cholesta-8,14,24-trienol to produce 4,4-dimethyl-cholesta-8,24-dienol. 4,4-dimethyl-cholesta-8,24-dienol is substrate of the C-4 demethylation complex ERG25-ERG26-ERG27 in which ERG25 catalyzes the three-step monooxygenation required for the demethylation of 4,4-dimethyl and 4alpha-methylsterols, ERG26 catalyzes the oxidative decarboxylation that results in a reduction of the 3-beta-hydroxy group at the C-3 carbon to an oxo group, and ERG27 is responsible for the reduction of the keto group on the C-3. ERG28 has a role as a scaffold to help anchor ERG25, ERG26 and ERG27 to the endoplasmic reticulum and ERG29 regulates the activity of the iron-containing C4-methylsterol oxidase ERG25. Then, the sterol 24-C-methyltransferase ERG6 catalyzes the methyl transfer from S-adenosyl-methionine to the C-24 of zymosterol to form fecosterol. The C-8 sterol isomerase ERG2 catalyzes the reaction which results in unsaturation at C-7 in the B ring of sterols and thus converts fecosterol to episterol. The sterol-C5-desaturase ERG3 then catalyzes the introduction of a C-5 double bond in the B ring to produce 5-dehydroepisterol. The C-22 sterol desaturase ERG5 further converts 5-dehydroepisterol into ergosta-5,7,22,24(28)-tetraen-3beta-ol by forming the C-22(23) double bond in the sterol side chain. Finally, ergosta-5,7,22,24(28)-tetraen-3beta-ol is substrate of the C-24(28) sterol reductase ERG4 to produce ergosterol (Probable).</text>
</comment>
<comment type="catalytic activity">
    <reaction evidence="3">
        <text>zymosterol + S-adenosyl-L-methionine = fecosterol + S-adenosyl-L-homocysteine + H(+)</text>
        <dbReference type="Rhea" id="RHEA:21128"/>
        <dbReference type="ChEBI" id="CHEBI:15378"/>
        <dbReference type="ChEBI" id="CHEBI:17038"/>
        <dbReference type="ChEBI" id="CHEBI:18252"/>
        <dbReference type="ChEBI" id="CHEBI:57856"/>
        <dbReference type="ChEBI" id="CHEBI:59789"/>
        <dbReference type="EC" id="2.1.1.41"/>
    </reaction>
    <physiologicalReaction direction="left-to-right" evidence="3">
        <dbReference type="Rhea" id="RHEA:21129"/>
    </physiologicalReaction>
</comment>
<comment type="activity regulation">
    <text evidence="3">Substrate analogs 25-azalanosterol and 24(R,S),25-epiminolanosterol act as inhibitors.</text>
</comment>
<comment type="biophysicochemical properties">
    <kinetics>
        <KM evidence="3">55 uM for zymosterol</KM>
    </kinetics>
</comment>
<comment type="pathway">
    <text evidence="3">Steroid metabolism; ergosterol biosynthesis; ergosterol from zymosterol: step 1/5.</text>
</comment>
<comment type="induction">
    <text evidence="2 4 5 6">Expression is induced in the presence of fluconazole and up-regulated in azole-resistant strain (PubMed:15820985). Expression is positively regulated by the transcription regulator HAP43 (PubMed:21592964). Expression is also induced by N-acetyl-D-glucosamine (PubMed:22406769). Expression is repressed during spider biofilm formation (PubMed:22265407).</text>
</comment>
<comment type="disruption phenotype">
    <text evidence="1 7">Does not affect the susceptibility to azoles (PubMed:9593144). Leads to hypersensitivity to cyclosporin A (CsA) and FK506, inhibitors of the protein phosphatase calcineurin (PubMed:11847103).</text>
</comment>
<comment type="similarity">
    <text evidence="9">Belongs to the class I-like SAM-binding methyltransferase superfamily. Erg6/SMT family.</text>
</comment>
<dbReference type="EC" id="2.1.1.41" evidence="3"/>
<dbReference type="EMBL" id="AF031941">
    <property type="protein sequence ID" value="AAC26626.1"/>
    <property type="molecule type" value="Genomic_DNA"/>
</dbReference>
<dbReference type="EMBL" id="CP017625">
    <property type="protein sequence ID" value="AOW28252.1"/>
    <property type="molecule type" value="Genomic_DNA"/>
</dbReference>
<dbReference type="RefSeq" id="XP_721708.2">
    <property type="nucleotide sequence ID" value="XM_716615.2"/>
</dbReference>
<dbReference type="SMR" id="O74198"/>
<dbReference type="BioGRID" id="1219749">
    <property type="interactions" value="1"/>
</dbReference>
<dbReference type="FunCoup" id="O74198">
    <property type="interactions" value="335"/>
</dbReference>
<dbReference type="STRING" id="237561.O74198"/>
<dbReference type="EnsemblFungi" id="C3_02150C_A-T">
    <property type="protein sequence ID" value="C3_02150C_A-T-p1"/>
    <property type="gene ID" value="C3_02150C_A"/>
</dbReference>
<dbReference type="GeneID" id="3636655"/>
<dbReference type="KEGG" id="cal:CAALFM_C302150CA"/>
<dbReference type="CGD" id="CAL0000189580">
    <property type="gene designation" value="ERG6"/>
</dbReference>
<dbReference type="VEuPathDB" id="FungiDB:C3_02150C_A"/>
<dbReference type="eggNOG" id="KOG1269">
    <property type="taxonomic scope" value="Eukaryota"/>
</dbReference>
<dbReference type="HOGENOM" id="CLU_039068_5_3_1"/>
<dbReference type="InParanoid" id="O74198"/>
<dbReference type="OMA" id="NGIATMM"/>
<dbReference type="OrthoDB" id="540004at2759"/>
<dbReference type="UniPathway" id="UPA00768">
    <property type="reaction ID" value="UER00760"/>
</dbReference>
<dbReference type="PRO" id="PR:O74198"/>
<dbReference type="Proteomes" id="UP000000559">
    <property type="component" value="Chromosome 3"/>
</dbReference>
<dbReference type="GO" id="GO:0005783">
    <property type="term" value="C:endoplasmic reticulum"/>
    <property type="evidence" value="ECO:0000318"/>
    <property type="project" value="GO_Central"/>
</dbReference>
<dbReference type="GO" id="GO:0005886">
    <property type="term" value="C:plasma membrane"/>
    <property type="evidence" value="ECO:0000314"/>
    <property type="project" value="CGD"/>
</dbReference>
<dbReference type="GO" id="GO:0003838">
    <property type="term" value="F:sterol 24-C-methyltransferase activity"/>
    <property type="evidence" value="ECO:0000314"/>
    <property type="project" value="CGD"/>
</dbReference>
<dbReference type="GO" id="GO:0006696">
    <property type="term" value="P:ergosterol biosynthetic process"/>
    <property type="evidence" value="ECO:0000315"/>
    <property type="project" value="CGD"/>
</dbReference>
<dbReference type="GO" id="GO:0032259">
    <property type="term" value="P:methylation"/>
    <property type="evidence" value="ECO:0007669"/>
    <property type="project" value="UniProtKB-KW"/>
</dbReference>
<dbReference type="GO" id="GO:0036196">
    <property type="term" value="P:zymosterol metabolic process"/>
    <property type="evidence" value="ECO:0000314"/>
    <property type="project" value="CGD"/>
</dbReference>
<dbReference type="CDD" id="cd02440">
    <property type="entry name" value="AdoMet_MTases"/>
    <property type="match status" value="1"/>
</dbReference>
<dbReference type="FunFam" id="3.40.50.150:FF:000121">
    <property type="entry name" value="Sterol 24-C-methyltransferase"/>
    <property type="match status" value="1"/>
</dbReference>
<dbReference type="Gene3D" id="3.40.50.150">
    <property type="entry name" value="Vaccinia Virus protein VP39"/>
    <property type="match status" value="1"/>
</dbReference>
<dbReference type="InterPro" id="IPR050447">
    <property type="entry name" value="Erg6_SMT_methyltransf"/>
</dbReference>
<dbReference type="InterPro" id="IPR013216">
    <property type="entry name" value="Methyltransf_11"/>
</dbReference>
<dbReference type="InterPro" id="IPR030384">
    <property type="entry name" value="MeTrfase_SMT"/>
</dbReference>
<dbReference type="InterPro" id="IPR029063">
    <property type="entry name" value="SAM-dependent_MTases_sf"/>
</dbReference>
<dbReference type="InterPro" id="IPR013705">
    <property type="entry name" value="Sterol_MeTrfase_C"/>
</dbReference>
<dbReference type="PANTHER" id="PTHR44068:SF1">
    <property type="entry name" value="HYPOTHETICAL LOC100005854"/>
    <property type="match status" value="1"/>
</dbReference>
<dbReference type="PANTHER" id="PTHR44068">
    <property type="entry name" value="ZGC:194242"/>
    <property type="match status" value="1"/>
</dbReference>
<dbReference type="Pfam" id="PF08241">
    <property type="entry name" value="Methyltransf_11"/>
    <property type="match status" value="1"/>
</dbReference>
<dbReference type="Pfam" id="PF08498">
    <property type="entry name" value="Sterol_MT_C"/>
    <property type="match status" value="1"/>
</dbReference>
<dbReference type="SUPFAM" id="SSF53335">
    <property type="entry name" value="S-adenosyl-L-methionine-dependent methyltransferases"/>
    <property type="match status" value="1"/>
</dbReference>
<dbReference type="PROSITE" id="PS51685">
    <property type="entry name" value="SAM_MT_ERG6_SMT"/>
    <property type="match status" value="1"/>
</dbReference>
<sequence>MSPVQLAEKNYERDEQFTKALHGESYKKTGLSALIAKSKDAASVAAEGYFKHWDGGISKDDEEKRLNDYSQLTHHYYNLVTDFYEYGWGSSFHFSRYYKGEAFRQATARHEHFLAHKMNLNENMKVLDVGCGVGGPGREITRFTDCEIVGLNNNDYQIERANHYAKKYHLDHKLSYVKGDFMQMDFEPESFDAVYAIEATVHAPVLEGVYSEIYKVLKPGGVFGVYEWVMTDKYDETNEEHRKIAYGIEVGDGIPKMYSRKVAEQALKNVGFEIEYQKDLADVDDEIPWYYPLSGDLKFCQTFGDYLTVFRTSRIGRFITTESVGLMEKIGLAPKGSKQVTHALEDAAVNLVEGGRQKLFTPMMLYVVRKPLEKKD</sequence>
<name>ERG6_CANAL</name>
<organism>
    <name type="scientific">Candida albicans (strain SC5314 / ATCC MYA-2876)</name>
    <name type="common">Yeast</name>
    <dbReference type="NCBI Taxonomy" id="237561"/>
    <lineage>
        <taxon>Eukaryota</taxon>
        <taxon>Fungi</taxon>
        <taxon>Dikarya</taxon>
        <taxon>Ascomycota</taxon>
        <taxon>Saccharomycotina</taxon>
        <taxon>Pichiomycetes</taxon>
        <taxon>Debaryomycetaceae</taxon>
        <taxon>Candida/Lodderomyces clade</taxon>
        <taxon>Candida</taxon>
    </lineage>
</organism>
<protein>
    <recommendedName>
        <fullName evidence="8">Sterol 24-C-methyltransferase</fullName>
        <shortName evidence="9">SCMT</shortName>
        <shortName evidence="8">SMT</shortName>
        <ecNumber evidence="3">2.1.1.41</ecNumber>
    </recommendedName>
    <alternativeName>
        <fullName evidence="9">Delta(24)-sterol C-methyltransferase</fullName>
    </alternativeName>
    <alternativeName>
        <fullName evidence="8">Ergosterol biosynthesis protein 6</fullName>
    </alternativeName>
</protein>